<organism>
    <name type="scientific">Arabidopsis thaliana</name>
    <name type="common">Mouse-ear cress</name>
    <dbReference type="NCBI Taxonomy" id="3702"/>
    <lineage>
        <taxon>Eukaryota</taxon>
        <taxon>Viridiplantae</taxon>
        <taxon>Streptophyta</taxon>
        <taxon>Embryophyta</taxon>
        <taxon>Tracheophyta</taxon>
        <taxon>Spermatophyta</taxon>
        <taxon>Magnoliopsida</taxon>
        <taxon>eudicotyledons</taxon>
        <taxon>Gunneridae</taxon>
        <taxon>Pentapetalae</taxon>
        <taxon>rosids</taxon>
        <taxon>malvids</taxon>
        <taxon>Brassicales</taxon>
        <taxon>Brassicaceae</taxon>
        <taxon>Camelineae</taxon>
        <taxon>Arabidopsis</taxon>
    </lineage>
</organism>
<proteinExistence type="inferred from homology"/>
<comment type="function">
    <text>Removal of H(2)O(2), oxidation of toxic reductants, biosynthesis and degradation of lignin, suberization, auxin catabolism, response to environmental stresses such as wounding, pathogen attack and oxidative stress. These functions might be dependent on each isozyme/isoform in each plant tissue.</text>
</comment>
<comment type="catalytic activity">
    <reaction>
        <text>2 a phenolic donor + H2O2 = 2 a phenolic radical donor + 2 H2O</text>
        <dbReference type="Rhea" id="RHEA:56136"/>
        <dbReference type="ChEBI" id="CHEBI:15377"/>
        <dbReference type="ChEBI" id="CHEBI:16240"/>
        <dbReference type="ChEBI" id="CHEBI:139520"/>
        <dbReference type="ChEBI" id="CHEBI:139521"/>
        <dbReference type="EC" id="1.11.1.7"/>
    </reaction>
</comment>
<comment type="cofactor">
    <cofactor evidence="2">
        <name>heme b</name>
        <dbReference type="ChEBI" id="CHEBI:60344"/>
    </cofactor>
    <text evidence="2">Binds 1 heme b (iron(II)-protoporphyrin IX) group per subunit.</text>
</comment>
<comment type="cofactor">
    <cofactor evidence="2">
        <name>Ca(2+)</name>
        <dbReference type="ChEBI" id="CHEBI:29108"/>
    </cofactor>
    <text evidence="2">Binds 2 calcium ions per subunit.</text>
</comment>
<comment type="subcellular location">
    <subcellularLocation>
        <location evidence="2">Secreted</location>
    </subcellularLocation>
</comment>
<comment type="miscellaneous">
    <text>There are 73 peroxidase genes in A.thaliana.</text>
</comment>
<comment type="similarity">
    <text evidence="2">Belongs to the peroxidase family. Classical plant (class III) peroxidase subfamily.</text>
</comment>
<accession>O81772</accession>
<accession>F4JSS1</accession>
<reference key="1">
    <citation type="journal article" date="1999" name="Nature">
        <title>Sequence and analysis of chromosome 4 of the plant Arabidopsis thaliana.</title>
        <authorList>
            <person name="Mayer K.F.X."/>
            <person name="Schueller C."/>
            <person name="Wambutt R."/>
            <person name="Murphy G."/>
            <person name="Volckaert G."/>
            <person name="Pohl T."/>
            <person name="Duesterhoeft A."/>
            <person name="Stiekema W."/>
            <person name="Entian K.-D."/>
            <person name="Terryn N."/>
            <person name="Harris B."/>
            <person name="Ansorge W."/>
            <person name="Brandt P."/>
            <person name="Grivell L.A."/>
            <person name="Rieger M."/>
            <person name="Weichselgartner M."/>
            <person name="de Simone V."/>
            <person name="Obermaier B."/>
            <person name="Mache R."/>
            <person name="Mueller M."/>
            <person name="Kreis M."/>
            <person name="Delseny M."/>
            <person name="Puigdomenech P."/>
            <person name="Watson M."/>
            <person name="Schmidtheini T."/>
            <person name="Reichert B."/>
            <person name="Portetelle D."/>
            <person name="Perez-Alonso M."/>
            <person name="Boutry M."/>
            <person name="Bancroft I."/>
            <person name="Vos P."/>
            <person name="Hoheisel J."/>
            <person name="Zimmermann W."/>
            <person name="Wedler H."/>
            <person name="Ridley P."/>
            <person name="Langham S.-A."/>
            <person name="McCullagh B."/>
            <person name="Bilham L."/>
            <person name="Robben J."/>
            <person name="van der Schueren J."/>
            <person name="Grymonprez B."/>
            <person name="Chuang Y.-J."/>
            <person name="Vandenbussche F."/>
            <person name="Braeken M."/>
            <person name="Weltjens I."/>
            <person name="Voet M."/>
            <person name="Bastiaens I."/>
            <person name="Aert R."/>
            <person name="Defoor E."/>
            <person name="Weitzenegger T."/>
            <person name="Bothe G."/>
            <person name="Ramsperger U."/>
            <person name="Hilbert H."/>
            <person name="Braun M."/>
            <person name="Holzer E."/>
            <person name="Brandt A."/>
            <person name="Peters S."/>
            <person name="van Staveren M."/>
            <person name="Dirkse W."/>
            <person name="Mooijman P."/>
            <person name="Klein Lankhorst R."/>
            <person name="Rose M."/>
            <person name="Hauf J."/>
            <person name="Koetter P."/>
            <person name="Berneiser S."/>
            <person name="Hempel S."/>
            <person name="Feldpausch M."/>
            <person name="Lamberth S."/>
            <person name="Van den Daele H."/>
            <person name="De Keyser A."/>
            <person name="Buysshaert C."/>
            <person name="Gielen J."/>
            <person name="Villarroel R."/>
            <person name="De Clercq R."/>
            <person name="van Montagu M."/>
            <person name="Rogers J."/>
            <person name="Cronin A."/>
            <person name="Quail M.A."/>
            <person name="Bray-Allen S."/>
            <person name="Clark L."/>
            <person name="Doggett J."/>
            <person name="Hall S."/>
            <person name="Kay M."/>
            <person name="Lennard N."/>
            <person name="McLay K."/>
            <person name="Mayes R."/>
            <person name="Pettett A."/>
            <person name="Rajandream M.A."/>
            <person name="Lyne M."/>
            <person name="Benes V."/>
            <person name="Rechmann S."/>
            <person name="Borkova D."/>
            <person name="Bloecker H."/>
            <person name="Scharfe M."/>
            <person name="Grimm M."/>
            <person name="Loehnert T.-H."/>
            <person name="Dose S."/>
            <person name="de Haan M."/>
            <person name="Maarse A.C."/>
            <person name="Schaefer M."/>
            <person name="Mueller-Auer S."/>
            <person name="Gabel C."/>
            <person name="Fuchs M."/>
            <person name="Fartmann B."/>
            <person name="Granderath K."/>
            <person name="Dauner D."/>
            <person name="Herzl A."/>
            <person name="Neumann S."/>
            <person name="Argiriou A."/>
            <person name="Vitale D."/>
            <person name="Liguori R."/>
            <person name="Piravandi E."/>
            <person name="Massenet O."/>
            <person name="Quigley F."/>
            <person name="Clabauld G."/>
            <person name="Muendlein A."/>
            <person name="Felber R."/>
            <person name="Schnabl S."/>
            <person name="Hiller R."/>
            <person name="Schmidt W."/>
            <person name="Lecharny A."/>
            <person name="Aubourg S."/>
            <person name="Chefdor F."/>
            <person name="Cooke R."/>
            <person name="Berger C."/>
            <person name="Monfort A."/>
            <person name="Casacuberta E."/>
            <person name="Gibbons T."/>
            <person name="Weber N."/>
            <person name="Vandenbol M."/>
            <person name="Bargues M."/>
            <person name="Terol J."/>
            <person name="Torres A."/>
            <person name="Perez-Perez A."/>
            <person name="Purnelle B."/>
            <person name="Bent E."/>
            <person name="Johnson S."/>
            <person name="Tacon D."/>
            <person name="Jesse T."/>
            <person name="Heijnen L."/>
            <person name="Schwarz S."/>
            <person name="Scholler P."/>
            <person name="Heber S."/>
            <person name="Francs P."/>
            <person name="Bielke C."/>
            <person name="Frishman D."/>
            <person name="Haase D."/>
            <person name="Lemcke K."/>
            <person name="Mewes H.-W."/>
            <person name="Stocker S."/>
            <person name="Zaccaria P."/>
            <person name="Bevan M."/>
            <person name="Wilson R.K."/>
            <person name="de la Bastide M."/>
            <person name="Habermann K."/>
            <person name="Parnell L."/>
            <person name="Dedhia N."/>
            <person name="Gnoj L."/>
            <person name="Schutz K."/>
            <person name="Huang E."/>
            <person name="Spiegel L."/>
            <person name="Sekhon M."/>
            <person name="Murray J."/>
            <person name="Sheet P."/>
            <person name="Cordes M."/>
            <person name="Abu-Threideh J."/>
            <person name="Stoneking T."/>
            <person name="Kalicki J."/>
            <person name="Graves T."/>
            <person name="Harmon G."/>
            <person name="Edwards J."/>
            <person name="Latreille P."/>
            <person name="Courtney L."/>
            <person name="Cloud J."/>
            <person name="Abbott A."/>
            <person name="Scott K."/>
            <person name="Johnson D."/>
            <person name="Minx P."/>
            <person name="Bentley D."/>
            <person name="Fulton B."/>
            <person name="Miller N."/>
            <person name="Greco T."/>
            <person name="Kemp K."/>
            <person name="Kramer J."/>
            <person name="Fulton L."/>
            <person name="Mardis E."/>
            <person name="Dante M."/>
            <person name="Pepin K."/>
            <person name="Hillier L.W."/>
            <person name="Nelson J."/>
            <person name="Spieth J."/>
            <person name="Ryan E."/>
            <person name="Andrews S."/>
            <person name="Geisel C."/>
            <person name="Layman D."/>
            <person name="Du H."/>
            <person name="Ali J."/>
            <person name="Berghoff A."/>
            <person name="Jones K."/>
            <person name="Drone K."/>
            <person name="Cotton M."/>
            <person name="Joshu C."/>
            <person name="Antonoiu B."/>
            <person name="Zidanic M."/>
            <person name="Strong C."/>
            <person name="Sun H."/>
            <person name="Lamar B."/>
            <person name="Yordan C."/>
            <person name="Ma P."/>
            <person name="Zhong J."/>
            <person name="Preston R."/>
            <person name="Vil D."/>
            <person name="Shekher M."/>
            <person name="Matero A."/>
            <person name="Shah R."/>
            <person name="Swaby I.K."/>
            <person name="O'Shaughnessy A."/>
            <person name="Rodriguez M."/>
            <person name="Hoffman J."/>
            <person name="Till S."/>
            <person name="Granat S."/>
            <person name="Shohdy N."/>
            <person name="Hasegawa A."/>
            <person name="Hameed A."/>
            <person name="Lodhi M."/>
            <person name="Johnson A."/>
            <person name="Chen E."/>
            <person name="Marra M.A."/>
            <person name="Martienssen R."/>
            <person name="McCombie W.R."/>
        </authorList>
    </citation>
    <scope>NUCLEOTIDE SEQUENCE [LARGE SCALE GENOMIC DNA]</scope>
    <source>
        <strain>cv. Columbia</strain>
    </source>
</reference>
<reference key="2">
    <citation type="journal article" date="2017" name="Plant J.">
        <title>Araport11: a complete reannotation of the Arabidopsis thaliana reference genome.</title>
        <authorList>
            <person name="Cheng C.Y."/>
            <person name="Krishnakumar V."/>
            <person name="Chan A.P."/>
            <person name="Thibaud-Nissen F."/>
            <person name="Schobel S."/>
            <person name="Town C.D."/>
        </authorList>
    </citation>
    <scope>GENOME REANNOTATION</scope>
    <source>
        <strain>cv. Columbia</strain>
    </source>
</reference>
<reference key="3">
    <citation type="journal article" date="2002" name="Gene">
        <title>Analysis and expression of the class III peroxidase large gene family in Arabidopsis thaliana.</title>
        <authorList>
            <person name="Tognolli M."/>
            <person name="Penel C."/>
            <person name="Greppin H."/>
            <person name="Simon P."/>
        </authorList>
    </citation>
    <scope>GENE FAMILY ORGANIZATION</scope>
    <scope>NOMENCLATURE</scope>
    <source>
        <strain>cv. Columbia</strain>
    </source>
</reference>
<sequence>MASSYRINCSTLLHLLMFLSSLLTSSANLSFNFYASSCSVAEFLVRNTVRSATSSDPTIPGKLLRLFFHDCFVQGCDASVLIQGNSTEKSDPGNASLGGFSVIDTAKNAIENLCPATVSCADIVALAARDAVEAAGGPVVEIPTGRRDGKESMAANVRPNIIDTDFTLDQMIDAFSSKGLSIQDLVVLSGAHTIGASHCNAFNGRFQRDSKGNFEVIDASLDNSYAETLMNKCSSSESSSLTVSNDPETSAVFDNQYYRNLETHKGLFQTDSALMEDNRTRTMVEELASDEESFFQRWSESFVKLSMVGVRVGEDGEIRRSCSSVN</sequence>
<protein>
    <recommendedName>
        <fullName>Peroxidase 46</fullName>
        <shortName>Atperox P46</shortName>
        <ecNumber>1.11.1.7</ecNumber>
    </recommendedName>
    <alternativeName>
        <fullName>ATP48</fullName>
    </alternativeName>
</protein>
<gene>
    <name type="primary">PER46</name>
    <name type="synonym">P46</name>
    <name type="ordered locus">At4g31760</name>
    <name type="ORF">F28M20.50</name>
</gene>
<keyword id="KW-0106">Calcium</keyword>
<keyword id="KW-1015">Disulfide bond</keyword>
<keyword id="KW-0325">Glycoprotein</keyword>
<keyword id="KW-0349">Heme</keyword>
<keyword id="KW-0376">Hydrogen peroxide</keyword>
<keyword id="KW-0408">Iron</keyword>
<keyword id="KW-0479">Metal-binding</keyword>
<keyword id="KW-0560">Oxidoreductase</keyword>
<keyword id="KW-0575">Peroxidase</keyword>
<keyword id="KW-1185">Reference proteome</keyword>
<keyword id="KW-0964">Secreted</keyword>
<keyword id="KW-0732">Signal</keyword>
<dbReference type="EC" id="1.11.1.7"/>
<dbReference type="EMBL" id="AL031004">
    <property type="protein sequence ID" value="CAA19747.1"/>
    <property type="molecule type" value="Genomic_DNA"/>
</dbReference>
<dbReference type="EMBL" id="AL161579">
    <property type="protein sequence ID" value="CAB79894.1"/>
    <property type="molecule type" value="Genomic_DNA"/>
</dbReference>
<dbReference type="EMBL" id="CP002687">
    <property type="protein sequence ID" value="AEE85954.2"/>
    <property type="molecule type" value="Genomic_DNA"/>
</dbReference>
<dbReference type="PIR" id="T05094">
    <property type="entry name" value="T05094"/>
</dbReference>
<dbReference type="RefSeq" id="NP_194904.3">
    <property type="nucleotide sequence ID" value="NM_119325.3"/>
</dbReference>
<dbReference type="SMR" id="O81772"/>
<dbReference type="FunCoup" id="O81772">
    <property type="interactions" value="129"/>
</dbReference>
<dbReference type="STRING" id="3702.O81772"/>
<dbReference type="PeroxiBase" id="212">
    <property type="entry name" value="AtPrx46"/>
</dbReference>
<dbReference type="GlyCosmos" id="O81772">
    <property type="glycosylation" value="3 sites, No reported glycans"/>
</dbReference>
<dbReference type="GlyGen" id="O81772">
    <property type="glycosylation" value="3 sites"/>
</dbReference>
<dbReference type="PaxDb" id="3702-AT4G31760.1"/>
<dbReference type="ProteomicsDB" id="236781"/>
<dbReference type="EnsemblPlants" id="AT4G31760.1">
    <property type="protein sequence ID" value="AT4G31760.1"/>
    <property type="gene ID" value="AT4G31760"/>
</dbReference>
<dbReference type="GeneID" id="829304"/>
<dbReference type="Gramene" id="AT4G31760.1">
    <property type="protein sequence ID" value="AT4G31760.1"/>
    <property type="gene ID" value="AT4G31760"/>
</dbReference>
<dbReference type="KEGG" id="ath:AT4G31760"/>
<dbReference type="Araport" id="AT4G31760"/>
<dbReference type="TAIR" id="AT4G31760"/>
<dbReference type="eggNOG" id="ENOG502QT3T">
    <property type="taxonomic scope" value="Eukaryota"/>
</dbReference>
<dbReference type="HOGENOM" id="CLU_010543_0_3_1"/>
<dbReference type="InParanoid" id="O81772"/>
<dbReference type="OMA" id="KFCPGTV"/>
<dbReference type="OrthoDB" id="2113341at2759"/>
<dbReference type="PhylomeDB" id="O81772"/>
<dbReference type="BioCyc" id="ARA:AT4G31760-MONOMER"/>
<dbReference type="PRO" id="PR:O81772"/>
<dbReference type="Proteomes" id="UP000006548">
    <property type="component" value="Chromosome 4"/>
</dbReference>
<dbReference type="ExpressionAtlas" id="O81772">
    <property type="expression patterns" value="baseline and differential"/>
</dbReference>
<dbReference type="GO" id="GO:0005576">
    <property type="term" value="C:extracellular region"/>
    <property type="evidence" value="ECO:0007669"/>
    <property type="project" value="UniProtKB-SubCell"/>
</dbReference>
<dbReference type="GO" id="GO:0020037">
    <property type="term" value="F:heme binding"/>
    <property type="evidence" value="ECO:0007669"/>
    <property type="project" value="InterPro"/>
</dbReference>
<dbReference type="GO" id="GO:0140825">
    <property type="term" value="F:lactoperoxidase activity"/>
    <property type="evidence" value="ECO:0007669"/>
    <property type="project" value="UniProtKB-EC"/>
</dbReference>
<dbReference type="GO" id="GO:0046872">
    <property type="term" value="F:metal ion binding"/>
    <property type="evidence" value="ECO:0007669"/>
    <property type="project" value="UniProtKB-KW"/>
</dbReference>
<dbReference type="GO" id="GO:0042744">
    <property type="term" value="P:hydrogen peroxide catabolic process"/>
    <property type="evidence" value="ECO:0007669"/>
    <property type="project" value="UniProtKB-KW"/>
</dbReference>
<dbReference type="GO" id="GO:0006979">
    <property type="term" value="P:response to oxidative stress"/>
    <property type="evidence" value="ECO:0007669"/>
    <property type="project" value="InterPro"/>
</dbReference>
<dbReference type="CDD" id="cd00693">
    <property type="entry name" value="secretory_peroxidase"/>
    <property type="match status" value="1"/>
</dbReference>
<dbReference type="FunFam" id="1.10.420.10:FF:000001">
    <property type="entry name" value="Peroxidase"/>
    <property type="match status" value="1"/>
</dbReference>
<dbReference type="FunFam" id="1.10.520.10:FF:000008">
    <property type="entry name" value="Peroxidase"/>
    <property type="match status" value="1"/>
</dbReference>
<dbReference type="Gene3D" id="1.10.520.10">
    <property type="match status" value="1"/>
</dbReference>
<dbReference type="Gene3D" id="1.10.420.10">
    <property type="entry name" value="Peroxidase, domain 2"/>
    <property type="match status" value="1"/>
</dbReference>
<dbReference type="InterPro" id="IPR002016">
    <property type="entry name" value="Haem_peroxidase"/>
</dbReference>
<dbReference type="InterPro" id="IPR010255">
    <property type="entry name" value="Haem_peroxidase_sf"/>
</dbReference>
<dbReference type="InterPro" id="IPR000823">
    <property type="entry name" value="Peroxidase_pln"/>
</dbReference>
<dbReference type="InterPro" id="IPR019793">
    <property type="entry name" value="Peroxidases_heam-ligand_BS"/>
</dbReference>
<dbReference type="InterPro" id="IPR033905">
    <property type="entry name" value="Secretory_peroxidase"/>
</dbReference>
<dbReference type="PANTHER" id="PTHR31517">
    <property type="match status" value="1"/>
</dbReference>
<dbReference type="PANTHER" id="PTHR31517:SF17">
    <property type="entry name" value="PEROXIDASE 6"/>
    <property type="match status" value="1"/>
</dbReference>
<dbReference type="Pfam" id="PF00141">
    <property type="entry name" value="peroxidase"/>
    <property type="match status" value="1"/>
</dbReference>
<dbReference type="PRINTS" id="PR00458">
    <property type="entry name" value="PEROXIDASE"/>
</dbReference>
<dbReference type="PRINTS" id="PR00461">
    <property type="entry name" value="PLPEROXIDASE"/>
</dbReference>
<dbReference type="SUPFAM" id="SSF48113">
    <property type="entry name" value="Heme-dependent peroxidases"/>
    <property type="match status" value="1"/>
</dbReference>
<dbReference type="PROSITE" id="PS00435">
    <property type="entry name" value="PEROXIDASE_1"/>
    <property type="match status" value="1"/>
</dbReference>
<dbReference type="PROSITE" id="PS50873">
    <property type="entry name" value="PEROXIDASE_4"/>
    <property type="match status" value="1"/>
</dbReference>
<name>PER46_ARATH</name>
<evidence type="ECO:0000255" key="1"/>
<evidence type="ECO:0000255" key="2">
    <source>
        <dbReference type="PROSITE-ProRule" id="PRU00297"/>
    </source>
</evidence>
<feature type="signal peptide" evidence="1">
    <location>
        <begin position="1"/>
        <end position="27"/>
    </location>
</feature>
<feature type="chain" id="PRO_0000023712" description="Peroxidase 46">
    <location>
        <begin position="28"/>
        <end position="326"/>
    </location>
</feature>
<feature type="active site" description="Proton acceptor" evidence="2">
    <location>
        <position position="69"/>
    </location>
</feature>
<feature type="binding site" evidence="2">
    <location>
        <position position="70"/>
    </location>
    <ligand>
        <name>Ca(2+)</name>
        <dbReference type="ChEBI" id="CHEBI:29108"/>
        <label>1</label>
    </ligand>
</feature>
<feature type="binding site" evidence="2">
    <location>
        <position position="73"/>
    </location>
    <ligand>
        <name>Ca(2+)</name>
        <dbReference type="ChEBI" id="CHEBI:29108"/>
        <label>1</label>
    </ligand>
</feature>
<feature type="binding site" evidence="2">
    <location>
        <position position="75"/>
    </location>
    <ligand>
        <name>Ca(2+)</name>
        <dbReference type="ChEBI" id="CHEBI:29108"/>
        <label>1</label>
    </ligand>
</feature>
<feature type="binding site" evidence="2">
    <location>
        <position position="77"/>
    </location>
    <ligand>
        <name>Ca(2+)</name>
        <dbReference type="ChEBI" id="CHEBI:29108"/>
        <label>1</label>
    </ligand>
</feature>
<feature type="binding site" evidence="2">
    <location>
        <position position="79"/>
    </location>
    <ligand>
        <name>Ca(2+)</name>
        <dbReference type="ChEBI" id="CHEBI:29108"/>
        <label>1</label>
    </ligand>
</feature>
<feature type="binding site" description="axial binding residue" evidence="2">
    <location>
        <position position="192"/>
    </location>
    <ligand>
        <name>heme b</name>
        <dbReference type="ChEBI" id="CHEBI:60344"/>
    </ligand>
    <ligandPart>
        <name>Fe</name>
        <dbReference type="ChEBI" id="CHEBI:18248"/>
    </ligandPart>
</feature>
<feature type="binding site" evidence="2">
    <location>
        <position position="193"/>
    </location>
    <ligand>
        <name>Ca(2+)</name>
        <dbReference type="ChEBI" id="CHEBI:29108"/>
        <label>2</label>
    </ligand>
</feature>
<feature type="binding site" evidence="2">
    <location>
        <position position="246"/>
    </location>
    <ligand>
        <name>Ca(2+)</name>
        <dbReference type="ChEBI" id="CHEBI:29108"/>
        <label>2</label>
    </ligand>
</feature>
<feature type="binding site" evidence="2">
    <location>
        <position position="249"/>
    </location>
    <ligand>
        <name>Ca(2+)</name>
        <dbReference type="ChEBI" id="CHEBI:29108"/>
        <label>2</label>
    </ligand>
</feature>
<feature type="binding site" evidence="2">
    <location>
        <position position="254"/>
    </location>
    <ligand>
        <name>Ca(2+)</name>
        <dbReference type="ChEBI" id="CHEBI:29108"/>
        <label>2</label>
    </ligand>
</feature>
<feature type="site" description="Transition state stabilizer" evidence="2">
    <location>
        <position position="65"/>
    </location>
</feature>
<feature type="glycosylation site" description="N-linked (GlcNAc...) asparagine" evidence="1">
    <location>
        <position position="28"/>
    </location>
</feature>
<feature type="glycosylation site" description="N-linked (GlcNAc...) asparagine" evidence="1">
    <location>
        <position position="85"/>
    </location>
</feature>
<feature type="glycosylation site" description="N-linked (GlcNAc...) asparagine" evidence="1">
    <location>
        <position position="278"/>
    </location>
</feature>
<feature type="disulfide bond" evidence="2">
    <location>
        <begin position="38"/>
        <end position="114"/>
    </location>
</feature>
<feature type="disulfide bond" evidence="2">
    <location>
        <begin position="71"/>
        <end position="76"/>
    </location>
</feature>
<feature type="disulfide bond" evidence="2">
    <location>
        <begin position="120"/>
        <end position="322"/>
    </location>
</feature>
<feature type="disulfide bond" evidence="2">
    <location>
        <begin position="199"/>
        <end position="233"/>
    </location>
</feature>